<dbReference type="EMBL" id="FM242711">
    <property type="protein sequence ID" value="CAS06382.1"/>
    <property type="molecule type" value="Genomic_DNA"/>
</dbReference>
<dbReference type="RefSeq" id="WP_003720973.1">
    <property type="nucleotide sequence ID" value="NC_012488.1"/>
</dbReference>
<dbReference type="SMR" id="C1KZK9"/>
<dbReference type="GeneID" id="93240543"/>
<dbReference type="KEGG" id="lmc:Lm4b_02628"/>
<dbReference type="HOGENOM" id="CLU_104295_1_2_9"/>
<dbReference type="GO" id="GO:0015935">
    <property type="term" value="C:small ribosomal subunit"/>
    <property type="evidence" value="ECO:0007669"/>
    <property type="project" value="InterPro"/>
</dbReference>
<dbReference type="GO" id="GO:0019843">
    <property type="term" value="F:rRNA binding"/>
    <property type="evidence" value="ECO:0007669"/>
    <property type="project" value="UniProtKB-UniRule"/>
</dbReference>
<dbReference type="GO" id="GO:0003735">
    <property type="term" value="F:structural constituent of ribosome"/>
    <property type="evidence" value="ECO:0007669"/>
    <property type="project" value="InterPro"/>
</dbReference>
<dbReference type="GO" id="GO:0000049">
    <property type="term" value="F:tRNA binding"/>
    <property type="evidence" value="ECO:0007669"/>
    <property type="project" value="UniProtKB-UniRule"/>
</dbReference>
<dbReference type="GO" id="GO:0006412">
    <property type="term" value="P:translation"/>
    <property type="evidence" value="ECO:0007669"/>
    <property type="project" value="UniProtKB-UniRule"/>
</dbReference>
<dbReference type="CDD" id="cd03368">
    <property type="entry name" value="Ribosomal_S12"/>
    <property type="match status" value="1"/>
</dbReference>
<dbReference type="FunFam" id="2.40.50.140:FF:000001">
    <property type="entry name" value="30S ribosomal protein S12"/>
    <property type="match status" value="1"/>
</dbReference>
<dbReference type="Gene3D" id="2.40.50.140">
    <property type="entry name" value="Nucleic acid-binding proteins"/>
    <property type="match status" value="1"/>
</dbReference>
<dbReference type="HAMAP" id="MF_00403_B">
    <property type="entry name" value="Ribosomal_uS12_B"/>
    <property type="match status" value="1"/>
</dbReference>
<dbReference type="InterPro" id="IPR012340">
    <property type="entry name" value="NA-bd_OB-fold"/>
</dbReference>
<dbReference type="InterPro" id="IPR006032">
    <property type="entry name" value="Ribosomal_uS12"/>
</dbReference>
<dbReference type="InterPro" id="IPR005679">
    <property type="entry name" value="Ribosomal_uS12_bac"/>
</dbReference>
<dbReference type="NCBIfam" id="TIGR00981">
    <property type="entry name" value="rpsL_bact"/>
    <property type="match status" value="1"/>
</dbReference>
<dbReference type="PANTHER" id="PTHR11652">
    <property type="entry name" value="30S RIBOSOMAL PROTEIN S12 FAMILY MEMBER"/>
    <property type="match status" value="1"/>
</dbReference>
<dbReference type="Pfam" id="PF00164">
    <property type="entry name" value="Ribosom_S12_S23"/>
    <property type="match status" value="1"/>
</dbReference>
<dbReference type="PIRSF" id="PIRSF002133">
    <property type="entry name" value="Ribosomal_S12/S23"/>
    <property type="match status" value="1"/>
</dbReference>
<dbReference type="PRINTS" id="PR01034">
    <property type="entry name" value="RIBOSOMALS12"/>
</dbReference>
<dbReference type="SUPFAM" id="SSF50249">
    <property type="entry name" value="Nucleic acid-binding proteins"/>
    <property type="match status" value="1"/>
</dbReference>
<dbReference type="PROSITE" id="PS00055">
    <property type="entry name" value="RIBOSOMAL_S12"/>
    <property type="match status" value="1"/>
</dbReference>
<reference key="1">
    <citation type="journal article" date="2012" name="BMC Genomics">
        <title>Comparative genomics and transcriptomics of lineages I, II, and III strains of Listeria monocytogenes.</title>
        <authorList>
            <person name="Hain T."/>
            <person name="Ghai R."/>
            <person name="Billion A."/>
            <person name="Kuenne C.T."/>
            <person name="Steinweg C."/>
            <person name="Izar B."/>
            <person name="Mohamed W."/>
            <person name="Mraheil M."/>
            <person name="Domann E."/>
            <person name="Schaffrath S."/>
            <person name="Karst U."/>
            <person name="Goesmann A."/>
            <person name="Oehm S."/>
            <person name="Puhler A."/>
            <person name="Merkl R."/>
            <person name="Vorwerk S."/>
            <person name="Glaser P."/>
            <person name="Garrido P."/>
            <person name="Rusniok C."/>
            <person name="Buchrieser C."/>
            <person name="Goebel W."/>
            <person name="Chakraborty T."/>
        </authorList>
    </citation>
    <scope>NUCLEOTIDE SEQUENCE [LARGE SCALE GENOMIC DNA]</scope>
    <source>
        <strain>CLIP80459</strain>
    </source>
</reference>
<name>RS12_LISMC</name>
<protein>
    <recommendedName>
        <fullName evidence="2">Small ribosomal subunit protein uS12</fullName>
    </recommendedName>
    <alternativeName>
        <fullName evidence="4">30S ribosomal protein S12</fullName>
    </alternativeName>
</protein>
<keyword id="KW-0488">Methylation</keyword>
<keyword id="KW-0687">Ribonucleoprotein</keyword>
<keyword id="KW-0689">Ribosomal protein</keyword>
<keyword id="KW-0694">RNA-binding</keyword>
<keyword id="KW-0699">rRNA-binding</keyword>
<keyword id="KW-0820">tRNA-binding</keyword>
<gene>
    <name evidence="2" type="primary">rpsL</name>
    <name type="ordered locus">Lm4b_02628</name>
</gene>
<comment type="function">
    <text evidence="2">With S4 and S5 plays an important role in translational accuracy.</text>
</comment>
<comment type="function">
    <text evidence="2">Interacts with and stabilizes bases of the 16S rRNA that are involved in tRNA selection in the A site and with the mRNA backbone. Located at the interface of the 30S and 50S subunits, it traverses the body of the 30S subunit contacting proteins on the other side and probably holding the rRNA structure together. The combined cluster of proteins S8, S12 and S17 appears to hold together the shoulder and platform of the 30S subunit.</text>
</comment>
<comment type="subunit">
    <text evidence="2">Part of the 30S ribosomal subunit. Contacts proteins S8 and S17. May interact with IF1 in the 30S initiation complex.</text>
</comment>
<comment type="similarity">
    <text evidence="2">Belongs to the universal ribosomal protein uS12 family.</text>
</comment>
<sequence>MPTINQLVRKPRQSKIKKSTSPALNKGLNSFKRELTDVNSPQKRGVCTRVGTMTPKKPNSALRKYARVRLSNGIEVTAYIPGIGHNLQEHSVVLIRGGRVKDLPGVRYHIVRGALDTAGVENRGQSRSKYGTKKPKK</sequence>
<proteinExistence type="inferred from homology"/>
<organism>
    <name type="scientific">Listeria monocytogenes serotype 4b (strain CLIP80459)</name>
    <dbReference type="NCBI Taxonomy" id="568819"/>
    <lineage>
        <taxon>Bacteria</taxon>
        <taxon>Bacillati</taxon>
        <taxon>Bacillota</taxon>
        <taxon>Bacilli</taxon>
        <taxon>Bacillales</taxon>
        <taxon>Listeriaceae</taxon>
        <taxon>Listeria</taxon>
    </lineage>
</organism>
<evidence type="ECO:0000250" key="1"/>
<evidence type="ECO:0000255" key="2">
    <source>
        <dbReference type="HAMAP-Rule" id="MF_00403"/>
    </source>
</evidence>
<evidence type="ECO:0000256" key="3">
    <source>
        <dbReference type="SAM" id="MobiDB-lite"/>
    </source>
</evidence>
<evidence type="ECO:0000305" key="4"/>
<feature type="chain" id="PRO_1000205920" description="Small ribosomal subunit protein uS12">
    <location>
        <begin position="1"/>
        <end position="137"/>
    </location>
</feature>
<feature type="region of interest" description="Disordered" evidence="3">
    <location>
        <begin position="1"/>
        <end position="26"/>
    </location>
</feature>
<feature type="compositionally biased region" description="Basic residues" evidence="3">
    <location>
        <begin position="9"/>
        <end position="18"/>
    </location>
</feature>
<feature type="modified residue" description="3-methylthioaspartic acid" evidence="1">
    <location>
        <position position="102"/>
    </location>
</feature>
<accession>C1KZK9</accession>